<gene>
    <name type="primary">hicB</name>
    <name type="ordered locus">Pfl01_0305</name>
</gene>
<name>HICB_PSEPF</name>
<sequence length="146" mass="16017">MRGSVMFEYALEVHEEPGSVWLSCAEIPEMHAAGDTLEEALDGAIDAMETALSIYVDDRRLIPTGDAGEQESDAVLRLPALTAAKVGLWNTLLESGVSKAELARRLGVQRPQVDRLVDFLHHSKIENVERALQQLGRRILLSVEAA</sequence>
<accession>Q3KJK7</accession>
<reference key="1">
    <citation type="journal article" date="2009" name="Genome Biol.">
        <title>Genomic and genetic analyses of diversity and plant interactions of Pseudomonas fluorescens.</title>
        <authorList>
            <person name="Silby M.W."/>
            <person name="Cerdeno-Tarraga A.M."/>
            <person name="Vernikos G.S."/>
            <person name="Giddens S.R."/>
            <person name="Jackson R.W."/>
            <person name="Preston G.M."/>
            <person name="Zhang X.-X."/>
            <person name="Moon C.D."/>
            <person name="Gehrig S.M."/>
            <person name="Godfrey S.A.C."/>
            <person name="Knight C.G."/>
            <person name="Malone J.G."/>
            <person name="Robinson Z."/>
            <person name="Spiers A.J."/>
            <person name="Harris S."/>
            <person name="Challis G.L."/>
            <person name="Yaxley A.M."/>
            <person name="Harris D."/>
            <person name="Seeger K."/>
            <person name="Murphy L."/>
            <person name="Rutter S."/>
            <person name="Squares R."/>
            <person name="Quail M.A."/>
            <person name="Saunders E."/>
            <person name="Mavromatis K."/>
            <person name="Brettin T.S."/>
            <person name="Bentley S.D."/>
            <person name="Hothersall J."/>
            <person name="Stephens E."/>
            <person name="Thomas C.M."/>
            <person name="Parkhill J."/>
            <person name="Levy S.B."/>
            <person name="Rainey P.B."/>
            <person name="Thomson N.R."/>
        </authorList>
    </citation>
    <scope>NUCLEOTIDE SEQUENCE [LARGE SCALE GENOMIC DNA]</scope>
    <source>
        <strain>Pf0-1</strain>
    </source>
</reference>
<organism>
    <name type="scientific">Pseudomonas fluorescens (strain Pf0-1)</name>
    <dbReference type="NCBI Taxonomy" id="205922"/>
    <lineage>
        <taxon>Bacteria</taxon>
        <taxon>Pseudomonadati</taxon>
        <taxon>Pseudomonadota</taxon>
        <taxon>Gammaproteobacteria</taxon>
        <taxon>Pseudomonadales</taxon>
        <taxon>Pseudomonadaceae</taxon>
        <taxon>Pseudomonas</taxon>
    </lineage>
</organism>
<evidence type="ECO:0000250" key="1"/>
<evidence type="ECO:0000305" key="2"/>
<feature type="chain" id="PRO_0000404522" description="Antitoxin HicB">
    <location>
        <begin position="1"/>
        <end position="146"/>
    </location>
</feature>
<dbReference type="EMBL" id="CP000094">
    <property type="protein sequence ID" value="ABA72049.1"/>
    <property type="molecule type" value="Genomic_DNA"/>
</dbReference>
<dbReference type="SMR" id="Q3KJK7"/>
<dbReference type="KEGG" id="pfo:Pfl01_0305"/>
<dbReference type="eggNOG" id="COG1598">
    <property type="taxonomic scope" value="Bacteria"/>
</dbReference>
<dbReference type="HOGENOM" id="CLU_140890_1_1_6"/>
<dbReference type="Proteomes" id="UP000002704">
    <property type="component" value="Chromosome"/>
</dbReference>
<dbReference type="GO" id="GO:0003677">
    <property type="term" value="F:DNA binding"/>
    <property type="evidence" value="ECO:0007669"/>
    <property type="project" value="UniProtKB-KW"/>
</dbReference>
<dbReference type="Gene3D" id="3.30.160.250">
    <property type="match status" value="1"/>
</dbReference>
<dbReference type="InterPro" id="IPR035069">
    <property type="entry name" value="TTHA1013/TTHA0281-like"/>
</dbReference>
<dbReference type="SUPFAM" id="SSF143100">
    <property type="entry name" value="TTHA1013/TTHA0281-like"/>
    <property type="match status" value="1"/>
</dbReference>
<keyword id="KW-0238">DNA-binding</keyword>
<keyword id="KW-0678">Repressor</keyword>
<keyword id="KW-0346">Stress response</keyword>
<keyword id="KW-1277">Toxin-antitoxin system</keyword>
<keyword id="KW-0804">Transcription</keyword>
<keyword id="KW-0805">Transcription regulation</keyword>
<comment type="function">
    <text evidence="1">Antitoxin component of a type II toxin-antitoxin (TA) system. Functions as an mRNA interferase antitoxin preventing effects of the HicA toxin (By similarity).</text>
</comment>
<comment type="subunit">
    <text evidence="1">Probably forms a complex with the probable mRNA interferase HicA; when complexed with HicA inhibits the toxin activity.</text>
</comment>
<comment type="similarity">
    <text evidence="2">Belongs to the HicB antitoxin family.</text>
</comment>
<protein>
    <recommendedName>
        <fullName>Antitoxin HicB</fullName>
    </recommendedName>
</protein>
<proteinExistence type="inferred from homology"/>